<reference key="1">
    <citation type="journal article" date="2003" name="Nature">
        <title>The genome of a motile marine Synechococcus.</title>
        <authorList>
            <person name="Palenik B."/>
            <person name="Brahamsha B."/>
            <person name="Larimer F.W."/>
            <person name="Land M.L."/>
            <person name="Hauser L."/>
            <person name="Chain P."/>
            <person name="Lamerdin J.E."/>
            <person name="Regala W."/>
            <person name="Allen E.E."/>
            <person name="McCarren J."/>
            <person name="Paulsen I.T."/>
            <person name="Dufresne A."/>
            <person name="Partensky F."/>
            <person name="Webb E.A."/>
            <person name="Waterbury J."/>
        </authorList>
    </citation>
    <scope>NUCLEOTIDE SEQUENCE [LARGE SCALE GENOMIC DNA]</scope>
    <source>
        <strain>WH8102</strain>
    </source>
</reference>
<protein>
    <recommendedName>
        <fullName evidence="1">Dihydroorotase</fullName>
        <shortName evidence="1">DHOase</shortName>
        <ecNumber evidence="1">3.5.2.3</ecNumber>
    </recommendedName>
</protein>
<evidence type="ECO:0000255" key="1">
    <source>
        <dbReference type="HAMAP-Rule" id="MF_00219"/>
    </source>
</evidence>
<keyword id="KW-0378">Hydrolase</keyword>
<keyword id="KW-0479">Metal-binding</keyword>
<keyword id="KW-0665">Pyrimidine biosynthesis</keyword>
<keyword id="KW-0862">Zinc</keyword>
<organism>
    <name type="scientific">Parasynechococcus marenigrum (strain WH8102)</name>
    <dbReference type="NCBI Taxonomy" id="84588"/>
    <lineage>
        <taxon>Bacteria</taxon>
        <taxon>Bacillati</taxon>
        <taxon>Cyanobacteriota</taxon>
        <taxon>Cyanophyceae</taxon>
        <taxon>Synechococcales</taxon>
        <taxon>Prochlorococcaceae</taxon>
        <taxon>Parasynechococcus</taxon>
        <taxon>Parasynechococcus marenigrum</taxon>
    </lineage>
</organism>
<proteinExistence type="inferred from homology"/>
<gene>
    <name evidence="1" type="primary">pyrC</name>
    <name type="ordered locus">SYNW1523</name>
</gene>
<feature type="chain" id="PRO_1000024068" description="Dihydroorotase">
    <location>
        <begin position="1"/>
        <end position="343"/>
    </location>
</feature>
<feature type="active site" evidence="1">
    <location>
        <position position="248"/>
    </location>
</feature>
<feature type="binding site" evidence="1">
    <location>
        <position position="14"/>
    </location>
    <ligand>
        <name>Zn(2+)</name>
        <dbReference type="ChEBI" id="CHEBI:29105"/>
        <label>1</label>
    </ligand>
</feature>
<feature type="binding site" evidence="1">
    <location>
        <begin position="16"/>
        <end position="18"/>
    </location>
    <ligand>
        <name>substrate</name>
    </ligand>
</feature>
<feature type="binding site" evidence="1">
    <location>
        <position position="16"/>
    </location>
    <ligand>
        <name>Zn(2+)</name>
        <dbReference type="ChEBI" id="CHEBI:29105"/>
        <label>1</label>
    </ligand>
</feature>
<feature type="binding site" evidence="1">
    <location>
        <position position="42"/>
    </location>
    <ligand>
        <name>substrate</name>
    </ligand>
</feature>
<feature type="binding site" description="via carbamate group" evidence="1">
    <location>
        <position position="100"/>
    </location>
    <ligand>
        <name>Zn(2+)</name>
        <dbReference type="ChEBI" id="CHEBI:29105"/>
        <label>1</label>
    </ligand>
</feature>
<feature type="binding site" description="via carbamate group" evidence="1">
    <location>
        <position position="100"/>
    </location>
    <ligand>
        <name>Zn(2+)</name>
        <dbReference type="ChEBI" id="CHEBI:29105"/>
        <label>2</label>
    </ligand>
</feature>
<feature type="binding site" evidence="1">
    <location>
        <position position="137"/>
    </location>
    <ligand>
        <name>substrate</name>
    </ligand>
</feature>
<feature type="binding site" evidence="1">
    <location>
        <position position="137"/>
    </location>
    <ligand>
        <name>Zn(2+)</name>
        <dbReference type="ChEBI" id="CHEBI:29105"/>
        <label>2</label>
    </ligand>
</feature>
<feature type="binding site" evidence="1">
    <location>
        <position position="175"/>
    </location>
    <ligand>
        <name>Zn(2+)</name>
        <dbReference type="ChEBI" id="CHEBI:29105"/>
        <label>2</label>
    </ligand>
</feature>
<feature type="binding site" evidence="1">
    <location>
        <position position="220"/>
    </location>
    <ligand>
        <name>substrate</name>
    </ligand>
</feature>
<feature type="binding site" evidence="1">
    <location>
        <position position="248"/>
    </location>
    <ligand>
        <name>Zn(2+)</name>
        <dbReference type="ChEBI" id="CHEBI:29105"/>
        <label>1</label>
    </ligand>
</feature>
<feature type="binding site" evidence="1">
    <location>
        <position position="252"/>
    </location>
    <ligand>
        <name>substrate</name>
    </ligand>
</feature>
<feature type="binding site" evidence="1">
    <location>
        <position position="264"/>
    </location>
    <ligand>
        <name>substrate</name>
    </ligand>
</feature>
<feature type="modified residue" description="N6-carboxylysine" evidence="1">
    <location>
        <position position="100"/>
    </location>
</feature>
<dbReference type="EC" id="3.5.2.3" evidence="1"/>
<dbReference type="EMBL" id="BX569693">
    <property type="protein sequence ID" value="CAE08038.1"/>
    <property type="molecule type" value="Genomic_DNA"/>
</dbReference>
<dbReference type="RefSeq" id="WP_011128387.1">
    <property type="nucleotide sequence ID" value="NC_005070.1"/>
</dbReference>
<dbReference type="SMR" id="Q7U618"/>
<dbReference type="STRING" id="84588.SYNW1523"/>
<dbReference type="KEGG" id="syw:SYNW1523"/>
<dbReference type="eggNOG" id="COG0418">
    <property type="taxonomic scope" value="Bacteria"/>
</dbReference>
<dbReference type="HOGENOM" id="CLU_041558_1_0_3"/>
<dbReference type="UniPathway" id="UPA00070">
    <property type="reaction ID" value="UER00117"/>
</dbReference>
<dbReference type="Proteomes" id="UP000001422">
    <property type="component" value="Chromosome"/>
</dbReference>
<dbReference type="GO" id="GO:0005829">
    <property type="term" value="C:cytosol"/>
    <property type="evidence" value="ECO:0007669"/>
    <property type="project" value="TreeGrafter"/>
</dbReference>
<dbReference type="GO" id="GO:0004151">
    <property type="term" value="F:dihydroorotase activity"/>
    <property type="evidence" value="ECO:0007669"/>
    <property type="project" value="UniProtKB-UniRule"/>
</dbReference>
<dbReference type="GO" id="GO:0008270">
    <property type="term" value="F:zinc ion binding"/>
    <property type="evidence" value="ECO:0007669"/>
    <property type="project" value="UniProtKB-UniRule"/>
</dbReference>
<dbReference type="GO" id="GO:0006207">
    <property type="term" value="P:'de novo' pyrimidine nucleobase biosynthetic process"/>
    <property type="evidence" value="ECO:0007669"/>
    <property type="project" value="TreeGrafter"/>
</dbReference>
<dbReference type="GO" id="GO:0044205">
    <property type="term" value="P:'de novo' UMP biosynthetic process"/>
    <property type="evidence" value="ECO:0007669"/>
    <property type="project" value="UniProtKB-UniRule"/>
</dbReference>
<dbReference type="CDD" id="cd01294">
    <property type="entry name" value="DHOase"/>
    <property type="match status" value="1"/>
</dbReference>
<dbReference type="Gene3D" id="3.20.20.140">
    <property type="entry name" value="Metal-dependent hydrolases"/>
    <property type="match status" value="1"/>
</dbReference>
<dbReference type="HAMAP" id="MF_00219">
    <property type="entry name" value="PyrC_classII"/>
    <property type="match status" value="1"/>
</dbReference>
<dbReference type="InterPro" id="IPR006680">
    <property type="entry name" value="Amidohydro-rel"/>
</dbReference>
<dbReference type="InterPro" id="IPR004721">
    <property type="entry name" value="DHOdimr"/>
</dbReference>
<dbReference type="InterPro" id="IPR002195">
    <property type="entry name" value="Dihydroorotase_CS"/>
</dbReference>
<dbReference type="InterPro" id="IPR032466">
    <property type="entry name" value="Metal_Hydrolase"/>
</dbReference>
<dbReference type="NCBIfam" id="TIGR00856">
    <property type="entry name" value="pyrC_dimer"/>
    <property type="match status" value="1"/>
</dbReference>
<dbReference type="PANTHER" id="PTHR43137">
    <property type="entry name" value="DIHYDROOROTASE"/>
    <property type="match status" value="1"/>
</dbReference>
<dbReference type="PANTHER" id="PTHR43137:SF1">
    <property type="entry name" value="DIHYDROOROTASE"/>
    <property type="match status" value="1"/>
</dbReference>
<dbReference type="Pfam" id="PF01979">
    <property type="entry name" value="Amidohydro_1"/>
    <property type="match status" value="1"/>
</dbReference>
<dbReference type="PIRSF" id="PIRSF001237">
    <property type="entry name" value="DHOdimr"/>
    <property type="match status" value="1"/>
</dbReference>
<dbReference type="SUPFAM" id="SSF51556">
    <property type="entry name" value="Metallo-dependent hydrolases"/>
    <property type="match status" value="1"/>
</dbReference>
<dbReference type="PROSITE" id="PS00483">
    <property type="entry name" value="DIHYDROOROTASE_2"/>
    <property type="match status" value="1"/>
</dbReference>
<accession>Q7U618</accession>
<name>PYRC_PARMW</name>
<sequence>MAEQLTITAPDDWHVHLRDEEMLERVVAYTARCFRRAIVMPNLRPPVTTVDAARSYRDRILSACPEGVAFTPLMTAYLTDNSDPDDLERGFQEGVYTAAKLYPANATTNSAAGVTDLDQIGRVLSRMEAIGMPLLIHGEVTDADVDVFDREAVFIERHLKSLRTRHPELKVVFEHITTEQAVDYVGSSDRNLAATITPHHLQINRNSMFLGGLRSDFYCLPVVKRERHRLALRRAATSGDPRFFLGTDSAPHPRAGKETSCGCAGIFNAPFALESYAQVFAEEEAMHHLEGFASLHGPAFYGLPANNDTVTLEKVAVDVPELVNGLVPFHAGETLPWRLQPCM</sequence>
<comment type="function">
    <text evidence="1">Catalyzes the reversible cyclization of carbamoyl aspartate to dihydroorotate.</text>
</comment>
<comment type="catalytic activity">
    <reaction evidence="1">
        <text>(S)-dihydroorotate + H2O = N-carbamoyl-L-aspartate + H(+)</text>
        <dbReference type="Rhea" id="RHEA:24296"/>
        <dbReference type="ChEBI" id="CHEBI:15377"/>
        <dbReference type="ChEBI" id="CHEBI:15378"/>
        <dbReference type="ChEBI" id="CHEBI:30864"/>
        <dbReference type="ChEBI" id="CHEBI:32814"/>
        <dbReference type="EC" id="3.5.2.3"/>
    </reaction>
</comment>
<comment type="cofactor">
    <cofactor evidence="1">
        <name>Zn(2+)</name>
        <dbReference type="ChEBI" id="CHEBI:29105"/>
    </cofactor>
    <text evidence="1">Binds 2 Zn(2+) ions per subunit.</text>
</comment>
<comment type="pathway">
    <text evidence="1">Pyrimidine metabolism; UMP biosynthesis via de novo pathway; (S)-dihydroorotate from bicarbonate: step 3/3.</text>
</comment>
<comment type="subunit">
    <text evidence="1">Homodimer.</text>
</comment>
<comment type="similarity">
    <text evidence="1">Belongs to the metallo-dependent hydrolases superfamily. DHOase family. Class II DHOase subfamily.</text>
</comment>